<keyword id="KW-1003">Cell membrane</keyword>
<keyword id="KW-1015">Disulfide bond</keyword>
<keyword id="KW-0325">Glycoprotein</keyword>
<keyword id="KW-0336">GPI-anchor</keyword>
<keyword id="KW-0449">Lipoprotein</keyword>
<keyword id="KW-0461">Malaria</keyword>
<keyword id="KW-0472">Membrane</keyword>
<keyword id="KW-0477">Merozoite</keyword>
<keyword id="KW-0677">Repeat</keyword>
<keyword id="KW-0732">Signal</keyword>
<dbReference type="EMBL" id="M60190">
    <property type="protein sequence ID" value="AAA29690.1"/>
    <property type="molecule type" value="Genomic_DNA"/>
</dbReference>
<dbReference type="GlyCosmos" id="Q99320">
    <property type="glycosylation" value="5 sites, No reported glycans"/>
</dbReference>
<dbReference type="VEuPathDB" id="PlasmoDB:Pf7G8_020011500"/>
<dbReference type="GO" id="GO:0005886">
    <property type="term" value="C:plasma membrane"/>
    <property type="evidence" value="ECO:0007669"/>
    <property type="project" value="UniProtKB-SubCell"/>
</dbReference>
<dbReference type="GO" id="GO:0098552">
    <property type="term" value="C:side of membrane"/>
    <property type="evidence" value="ECO:0007669"/>
    <property type="project" value="UniProtKB-KW"/>
</dbReference>
<dbReference type="GO" id="GO:0007155">
    <property type="term" value="P:cell adhesion"/>
    <property type="evidence" value="ECO:0007669"/>
    <property type="project" value="InterPro"/>
</dbReference>
<dbReference type="InterPro" id="IPR001136">
    <property type="entry name" value="MSA2"/>
</dbReference>
<dbReference type="Pfam" id="PF00985">
    <property type="entry name" value="MSA_2"/>
    <property type="match status" value="1"/>
</dbReference>
<dbReference type="PIRSF" id="PIRSF003575">
    <property type="entry name" value="MSA_2"/>
    <property type="match status" value="1"/>
</dbReference>
<organism>
    <name type="scientific">Plasmodium falciparum (isolate 7G8)</name>
    <dbReference type="NCBI Taxonomy" id="57266"/>
    <lineage>
        <taxon>Eukaryota</taxon>
        <taxon>Sar</taxon>
        <taxon>Alveolata</taxon>
        <taxon>Apicomplexa</taxon>
        <taxon>Aconoidasida</taxon>
        <taxon>Haemosporida</taxon>
        <taxon>Plasmodiidae</taxon>
        <taxon>Plasmodium</taxon>
        <taxon>Plasmodium (Laverania)</taxon>
    </lineage>
</organism>
<accession>Q99320</accession>
<gene>
    <name evidence="3" type="primary">MSP2</name>
    <name evidence="7" type="synonym">MSA2</name>
</gene>
<comment type="function">
    <text evidence="3">May play a role in the merozoite attachment to the erythrocyte.</text>
</comment>
<comment type="subcellular location">
    <subcellularLocation>
        <location evidence="3">Cell membrane</location>
        <topology evidence="1">Lipid-anchor</topology>
        <topology evidence="1">GPI-anchor</topology>
    </subcellularLocation>
    <text evidence="3">During host erythrocyte invasion by merozoites, carried into invaded erythrocytes where it is rapidly degraded.</text>
</comment>
<comment type="developmental stage">
    <text evidence="6">Expressed during the asexual blood stage, including in the schizont stage (at protein level).</text>
</comment>
<comment type="domain">
    <text evidence="3">The N-terminal region appears to be involved in lipid binding.</text>
</comment>
<comment type="polymorphism">
    <text evidence="6">The sequence varies across Plasmodium strains (PubMed:2090943). All variants share conserved N- and C-terminal regions; however, they belong to two allelic families, represented by 3D7 strain and FC27 strain sequences respectively, distinguished by tandem repeats and dimorphic flanking sequences within the central region of the protein (PubMed:2090943).</text>
</comment>
<proteinExistence type="evidence at protein level"/>
<feature type="signal peptide" evidence="4">
    <location>
        <begin position="1"/>
        <end position="20"/>
    </location>
</feature>
<feature type="chain" id="PRO_0000024586" description="Merozoite surface protein 2">
    <location>
        <begin position="21"/>
        <end position="250"/>
    </location>
</feature>
<feature type="propeptide" id="PRO_0000024587" description="Removed in mature form" evidence="1">
    <location>
        <begin position="251"/>
        <end position="276"/>
    </location>
</feature>
<feature type="repeat" description="1" evidence="6">
    <location>
        <begin position="53"/>
        <end position="58"/>
    </location>
</feature>
<feature type="repeat" description="2" evidence="6">
    <location>
        <begin position="59"/>
        <end position="64"/>
    </location>
</feature>
<feature type="repeat" description="3" evidence="6">
    <location>
        <begin position="65"/>
        <end position="70"/>
    </location>
</feature>
<feature type="repeat" description="4" evidence="6">
    <location>
        <begin position="71"/>
        <end position="76"/>
    </location>
</feature>
<feature type="repeat" description="5" evidence="6">
    <location>
        <begin position="77"/>
        <end position="82"/>
    </location>
</feature>
<feature type="region of interest" description="Disordered" evidence="5">
    <location>
        <begin position="44"/>
        <end position="242"/>
    </location>
</feature>
<feature type="region of interest" description="Polymorphic region" evidence="6">
    <location>
        <begin position="44"/>
        <end position="202"/>
    </location>
</feature>
<feature type="region of interest" description="5 X 6 AA tandem repeats of G-G-S-G-S-A" evidence="6">
    <location>
        <begin position="53"/>
        <end position="82"/>
    </location>
</feature>
<feature type="compositionally biased region" description="Gly residues" evidence="5">
    <location>
        <begin position="51"/>
        <end position="90"/>
    </location>
</feature>
<feature type="compositionally biased region" description="Low complexity" evidence="5">
    <location>
        <begin position="91"/>
        <end position="127"/>
    </location>
</feature>
<feature type="compositionally biased region" description="Polar residues" evidence="5">
    <location>
        <begin position="143"/>
        <end position="169"/>
    </location>
</feature>
<feature type="compositionally biased region" description="Polar residues" evidence="5">
    <location>
        <begin position="176"/>
        <end position="187"/>
    </location>
</feature>
<feature type="compositionally biased region" description="Polar residues" evidence="5">
    <location>
        <begin position="194"/>
        <end position="204"/>
    </location>
</feature>
<feature type="compositionally biased region" description="Basic and acidic residues" evidence="5">
    <location>
        <begin position="229"/>
        <end position="238"/>
    </location>
</feature>
<feature type="lipid moiety-binding region" description="GPI-anchor amidated asparagine" evidence="1">
    <location>
        <position position="250"/>
    </location>
</feature>
<feature type="glycosylation site" description="N-linked (GlcNAc...) asparagine" evidence="4">
    <location>
        <position position="22"/>
    </location>
</feature>
<feature type="glycosylation site" description="N-linked (GlcNAc...) asparagine" evidence="4">
    <location>
        <position position="36"/>
    </location>
</feature>
<feature type="glycosylation site" description="N-linked (GlcNAc...) asparagine" evidence="4">
    <location>
        <position position="153"/>
    </location>
</feature>
<feature type="glycosylation site" description="N-linked (GlcNAc...) asparagine" evidence="4">
    <location>
        <position position="225"/>
    </location>
</feature>
<feature type="glycosylation site" description="N-linked (GlcNAc...) asparagine" evidence="4">
    <location>
        <position position="250"/>
    </location>
</feature>
<feature type="disulfide bond" evidence="2">
    <location>
        <begin position="233"/>
        <end position="241"/>
    </location>
</feature>
<protein>
    <recommendedName>
        <fullName evidence="3">Merozoite surface protein 2</fullName>
    </recommendedName>
    <alternativeName>
        <fullName evidence="7">Merozoite surface antigen 2</fullName>
        <shortName evidence="7">MSA-2</shortName>
    </alternativeName>
</protein>
<name>MSA2_PLAF8</name>
<evidence type="ECO:0000250" key="1">
    <source>
        <dbReference type="UniProtKB" id="P19260"/>
    </source>
</evidence>
<evidence type="ECO:0000250" key="2">
    <source>
        <dbReference type="UniProtKB" id="P19599"/>
    </source>
</evidence>
<evidence type="ECO:0000250" key="3">
    <source>
        <dbReference type="UniProtKB" id="P50498"/>
    </source>
</evidence>
<evidence type="ECO:0000255" key="4"/>
<evidence type="ECO:0000256" key="5">
    <source>
        <dbReference type="SAM" id="MobiDB-lite"/>
    </source>
</evidence>
<evidence type="ECO:0000269" key="6">
    <source>
    </source>
</evidence>
<evidence type="ECO:0000303" key="7">
    <source>
    </source>
</evidence>
<sequence>MKVIKTLSIINFFIFVTFNIKNESKYSNTFINNAYNMSIRRSMAESNPSTGAGGSGSAGGSGSAGGSGSAGGSGSAGGSGSAGSGDGNGANPGADAERSPSTPATTTTTTTTNDAEASTSTSSENPNHNNAETNPKGKGEVQKPNQANKETQNNSNVQQDSQTKSNVPPTQDADTKSPTAQPEQAENSAPIAEQTESPELQSAPENKGTGQHGHMHGSRNNHPQNTSDSQKECTDGNKENCGAAPSLLSNSSNIASINKFVVLISATLVLSFAIFI</sequence>
<reference key="1">
    <citation type="journal article" date="1990" name="Mol. Biochem. Parasitol.">
        <title>Sequence comparison of allelic forms of the Plasmodium falciparum merozoite surface antigen MSA2.</title>
        <authorList>
            <person name="Thomas A.W."/>
            <person name="Carr D.A."/>
            <person name="Carter J.M."/>
            <person name="Lyon J.A."/>
        </authorList>
    </citation>
    <scope>NUCLEOTIDE SEQUENCE [GENOMIC DNA]</scope>
    <scope>DEVELOPMENTAL STAGE</scope>
    <scope>POLYMORPHISM</scope>
    <scope>REPEATS</scope>
</reference>